<gene>
    <name type="primary">mauA</name>
</gene>
<sequence length="187" mass="20237">MKKDTGFDSKIEKLARTTASKTGRRGFIGRLGGFLVGSALLPLLPVDRRSRLGGEVQAATTGNLTRSGFKPQDKDPKACEYWRHCTIDGNLCDCCGGTLTSCPPGSSLSPSSWVASCYNPGDQQTYLIAYRDCCGKQTCGRCNCVNTQGELPVYRPEFNNDIVWCFGADNDAMTYHCTISPIVGKAS</sequence>
<dbReference type="EC" id="1.4.9.1"/>
<dbReference type="EMBL" id="L26407">
    <property type="protein sequence ID" value="AAB46951.1"/>
    <property type="molecule type" value="Genomic_DNA"/>
</dbReference>
<dbReference type="PIR" id="T10073">
    <property type="entry name" value="T10073"/>
</dbReference>
<dbReference type="SMR" id="Q59543"/>
<dbReference type="STRING" id="1122236.GCA_000378225_02089"/>
<dbReference type="BioCyc" id="MetaCyc:MONOMER-3908"/>
<dbReference type="UniPathway" id="UPA00895">
    <property type="reaction ID" value="UER00870"/>
</dbReference>
<dbReference type="GO" id="GO:0030288">
    <property type="term" value="C:outer membrane-bounded periplasmic space"/>
    <property type="evidence" value="ECO:0007669"/>
    <property type="project" value="InterPro"/>
</dbReference>
<dbReference type="GO" id="GO:0030058">
    <property type="term" value="F:aliphatic amine dehydrogenase activity"/>
    <property type="evidence" value="ECO:0007669"/>
    <property type="project" value="InterPro"/>
</dbReference>
<dbReference type="GO" id="GO:0052876">
    <property type="term" value="F:methylamine dehydrogenase (amicyanin) activity"/>
    <property type="evidence" value="ECO:0007669"/>
    <property type="project" value="UniProtKB-EC"/>
</dbReference>
<dbReference type="GO" id="GO:0009308">
    <property type="term" value="P:amine metabolic process"/>
    <property type="evidence" value="ECO:0007669"/>
    <property type="project" value="InterPro"/>
</dbReference>
<dbReference type="Gene3D" id="2.60.30.10">
    <property type="entry name" value="Methylamine/Aralkylamine dehydrogenase light chain"/>
    <property type="match status" value="1"/>
</dbReference>
<dbReference type="InterPro" id="IPR016008">
    <property type="entry name" value="Amine_DH_Ltc"/>
</dbReference>
<dbReference type="InterPro" id="IPR036560">
    <property type="entry name" value="MADH/AADH_L_sf"/>
</dbReference>
<dbReference type="InterPro" id="IPR013504">
    <property type="entry name" value="MADH/AADH_Ltc_C_dom"/>
</dbReference>
<dbReference type="InterPro" id="IPR004229">
    <property type="entry name" value="MeN_DH_Ltc"/>
</dbReference>
<dbReference type="NCBIfam" id="TIGR02659">
    <property type="entry name" value="TTQ_MADH_Lt"/>
    <property type="match status" value="1"/>
</dbReference>
<dbReference type="Pfam" id="PF02975">
    <property type="entry name" value="Me-amine-dh_L"/>
    <property type="match status" value="1"/>
</dbReference>
<dbReference type="PIRSF" id="PIRSF000192">
    <property type="entry name" value="Amine_dh_beta"/>
    <property type="match status" value="1"/>
</dbReference>
<dbReference type="SUPFAM" id="SSF57561">
    <property type="entry name" value="Methylamine dehydrogenase, L chain"/>
    <property type="match status" value="1"/>
</dbReference>
<reference key="1">
    <citation type="journal article" date="1994" name="J. Bacteriol.">
        <title>Organization of the methylamine utilization (mau) genes in Methylophilus methylotrophus W3A1-NS.</title>
        <authorList>
            <person name="Chistoserdov A.Y."/>
            <person name="McIntire W.S."/>
            <person name="Mathews F.S."/>
            <person name="Lidstrom M.E."/>
        </authorList>
    </citation>
    <scope>NUCLEOTIDE SEQUENCE [GENOMIC DNA]</scope>
</reference>
<name>DHML_METME</name>
<keyword id="KW-1015">Disulfide bond</keyword>
<keyword id="KW-0249">Electron transport</keyword>
<keyword id="KW-0560">Oxidoreductase</keyword>
<keyword id="KW-0574">Periplasm</keyword>
<keyword id="KW-0732">Signal</keyword>
<keyword id="KW-0813">Transport</keyword>
<keyword id="KW-0824">TTQ</keyword>
<feature type="signal peptide" description="Tat-type signal" evidence="2">
    <location>
        <begin position="1"/>
        <end position="57"/>
    </location>
</feature>
<feature type="chain" id="PRO_0000025574" description="Methylamine dehydrogenase light chain">
    <location>
        <begin position="58"/>
        <end position="187"/>
    </location>
</feature>
<feature type="modified residue" description="Tryptophylquinone" evidence="1">
    <location>
        <position position="113"/>
    </location>
</feature>
<feature type="disulfide bond" evidence="1">
    <location>
        <begin position="79"/>
        <end position="144"/>
    </location>
</feature>
<feature type="disulfide bond" evidence="1">
    <location>
        <begin position="85"/>
        <end position="117"/>
    </location>
</feature>
<feature type="disulfide bond" evidence="1">
    <location>
        <begin position="92"/>
        <end position="177"/>
    </location>
</feature>
<feature type="disulfide bond" evidence="1">
    <location>
        <begin position="94"/>
        <end position="142"/>
    </location>
</feature>
<feature type="disulfide bond" evidence="1">
    <location>
        <begin position="102"/>
        <end position="133"/>
    </location>
</feature>
<feature type="disulfide bond" evidence="1">
    <location>
        <begin position="134"/>
        <end position="165"/>
    </location>
</feature>
<feature type="cross-link" description="Tryptophan tryptophylquinone (Trp-Trp)" evidence="1">
    <location>
        <begin position="113"/>
        <end position="164"/>
    </location>
</feature>
<accession>Q59543</accession>
<evidence type="ECO:0000250" key="1"/>
<evidence type="ECO:0000255" key="2"/>
<evidence type="ECO:0000305" key="3"/>
<proteinExistence type="inferred from homology"/>
<protein>
    <recommendedName>
        <fullName>Methylamine dehydrogenase light chain</fullName>
        <shortName>MADH</shortName>
        <ecNumber>1.4.9.1</ecNumber>
    </recommendedName>
    <alternativeName>
        <fullName>Methylamine dehydrogenase (amicyanin)</fullName>
    </alternativeName>
</protein>
<comment type="function">
    <text>Methylamine dehydrogenase carries out the oxidation of methylamine. Electrons are passed from methylamine dehydrogenase to amicyanin.</text>
</comment>
<comment type="catalytic activity">
    <reaction>
        <text>2 oxidized [amicyanin] + methylamine + H2O = 2 reduced [amicyanin] + formaldehyde + NH4(+) + 2 H(+)</text>
        <dbReference type="Rhea" id="RHEA:30207"/>
        <dbReference type="Rhea" id="RHEA-COMP:11100"/>
        <dbReference type="Rhea" id="RHEA-COMP:11101"/>
        <dbReference type="ChEBI" id="CHEBI:15377"/>
        <dbReference type="ChEBI" id="CHEBI:15378"/>
        <dbReference type="ChEBI" id="CHEBI:16842"/>
        <dbReference type="ChEBI" id="CHEBI:28938"/>
        <dbReference type="ChEBI" id="CHEBI:29036"/>
        <dbReference type="ChEBI" id="CHEBI:49552"/>
        <dbReference type="ChEBI" id="CHEBI:59338"/>
        <dbReference type="EC" id="1.4.9.1"/>
    </reaction>
</comment>
<comment type="cofactor">
    <cofactor evidence="1">
        <name>tryptophan tryptophylquinone residue</name>
        <dbReference type="ChEBI" id="CHEBI:20251"/>
    </cofactor>
    <text evidence="1">Uses a protein-derived tryptophan tryptophylquinone (TTQ) cofactor.</text>
</comment>
<comment type="pathway">
    <text>One-carbon metabolism; methylamine degradation; formaldehyde from methylamine: step 1/1.</text>
</comment>
<comment type="subunit">
    <text>Heterotetramer of two light and two heavy chains.</text>
</comment>
<comment type="subcellular location">
    <subcellularLocation>
        <location>Periplasm</location>
    </subcellularLocation>
</comment>
<comment type="PTM">
    <text>Predicted to be exported by the Tat system. The position of the signal peptide cleavage has not been experimentally proven.</text>
</comment>
<comment type="PTM">
    <text>Tryptophan tryptophylquinone (TTQ) is formed by oxidation of the indole ring of a tryptophan to form tryptophylquinone followed by covalent cross-linking with another tryptophan residue.</text>
</comment>
<comment type="similarity">
    <text evidence="3">Belongs to the aromatic amine dehydrogenase light chain family.</text>
</comment>
<organism>
    <name type="scientific">Methylophilus methylotrophus</name>
    <name type="common">Bacterium W3A1</name>
    <dbReference type="NCBI Taxonomy" id="17"/>
    <lineage>
        <taxon>Bacteria</taxon>
        <taxon>Pseudomonadati</taxon>
        <taxon>Pseudomonadota</taxon>
        <taxon>Betaproteobacteria</taxon>
        <taxon>Nitrosomonadales</taxon>
        <taxon>Methylophilaceae</taxon>
        <taxon>Methylophilus</taxon>
    </lineage>
</organism>